<feature type="chain" id="PRO_0000365371" description="Eukaryotic translation initiation factor 3 subunit I">
    <location>
        <begin position="1"/>
        <end position="346"/>
    </location>
</feature>
<feature type="repeat" description="WD 1">
    <location>
        <begin position="8"/>
        <end position="49"/>
    </location>
</feature>
<feature type="repeat" description="WD 2">
    <location>
        <begin position="50"/>
        <end position="91"/>
    </location>
</feature>
<feature type="repeat" description="WD 3">
    <location>
        <begin position="145"/>
        <end position="184"/>
    </location>
</feature>
<feature type="repeat" description="WD 4">
    <location>
        <begin position="189"/>
        <end position="228"/>
    </location>
</feature>
<feature type="repeat" description="WD 5">
    <location>
        <begin position="286"/>
        <end position="325"/>
    </location>
</feature>
<sequence length="346" mass="38797">MRPILLSGHERALTQIKYNRDGDLLFSVSKDQQICVWFAHNGERLGTYHGHQGAIWTIDVDPTSTILASGSADNTIRLWEIKTGRLLKTWDFPTAVKRVEFSEDGSKLLGVTEKRMGHLGTIVVLDIKLDVDAEQSDEKAMTIVCEDSKATVAGWSYLSKYIIAGHEDGSVSQFDGKNGDLLYNIPIHELNQPITDLQWSHDRTYFITASKDKTSKLITAKDLEVLKTYPADTPLNSATITRKKDFVILGGGQAAMDVTTTSARQGKFEARFYHKIFESEIGRVRGHFGPLNTVAADPTGKSYASGGEDGYVRIHHFDKGYFDFMYEVERERQNKLNQQQQQTISA</sequence>
<comment type="function">
    <text evidence="1">Component of the eukaryotic translation initiation factor 3 (eIF-3) complex, which is involved in protein synthesis of a specialized repertoire of mRNAs and, together with other initiation factors, stimulates binding of mRNA and methionyl-tRNAi to the 40S ribosome. The eIF-3 complex specifically targets and initiates translation of a subset of mRNAs involved in cell proliferation.</text>
</comment>
<comment type="subunit">
    <text evidence="1">Component of the eukaryotic translation initiation factor 3 (eIF-3) complex.</text>
</comment>
<comment type="subcellular location">
    <subcellularLocation>
        <location evidence="1">Cytoplasm</location>
    </subcellularLocation>
</comment>
<comment type="similarity">
    <text evidence="1">Belongs to the eIF-3 subunit I family.</text>
</comment>
<organism>
    <name type="scientific">Neurospora crassa (strain ATCC 24698 / 74-OR23-1A / CBS 708.71 / DSM 1257 / FGSC 987)</name>
    <dbReference type="NCBI Taxonomy" id="367110"/>
    <lineage>
        <taxon>Eukaryota</taxon>
        <taxon>Fungi</taxon>
        <taxon>Dikarya</taxon>
        <taxon>Ascomycota</taxon>
        <taxon>Pezizomycotina</taxon>
        <taxon>Sordariomycetes</taxon>
        <taxon>Sordariomycetidae</taxon>
        <taxon>Sordariales</taxon>
        <taxon>Sordariaceae</taxon>
        <taxon>Neurospora</taxon>
    </lineage>
</organism>
<dbReference type="EMBL" id="CM002241">
    <property type="protein sequence ID" value="EAA27313.1"/>
    <property type="molecule type" value="Genomic_DNA"/>
</dbReference>
<dbReference type="RefSeq" id="XP_956549.1">
    <property type="nucleotide sequence ID" value="XM_951456.3"/>
</dbReference>
<dbReference type="SMR" id="Q7RXH4"/>
<dbReference type="FunCoup" id="Q7RXH4">
    <property type="interactions" value="1053"/>
</dbReference>
<dbReference type="STRING" id="367110.Q7RXH4"/>
<dbReference type="PaxDb" id="5141-EFNCRP00000003563"/>
<dbReference type="EnsemblFungi" id="EAA27313">
    <property type="protein sequence ID" value="EAA27313"/>
    <property type="gene ID" value="NCU03876"/>
</dbReference>
<dbReference type="GeneID" id="3872687"/>
<dbReference type="KEGG" id="ncr:NCU03876"/>
<dbReference type="VEuPathDB" id="FungiDB:NCU03876"/>
<dbReference type="HOGENOM" id="CLU_043845_0_1_1"/>
<dbReference type="InParanoid" id="Q7RXH4"/>
<dbReference type="OMA" id="VWFSHNG"/>
<dbReference type="OrthoDB" id="24966at2759"/>
<dbReference type="Proteomes" id="UP000001805">
    <property type="component" value="Chromosome 5, Linkage Group VI"/>
</dbReference>
<dbReference type="GO" id="GO:0016282">
    <property type="term" value="C:eukaryotic 43S preinitiation complex"/>
    <property type="evidence" value="ECO:0007669"/>
    <property type="project" value="UniProtKB-UniRule"/>
</dbReference>
<dbReference type="GO" id="GO:0033290">
    <property type="term" value="C:eukaryotic 48S preinitiation complex"/>
    <property type="evidence" value="ECO:0007669"/>
    <property type="project" value="UniProtKB-UniRule"/>
</dbReference>
<dbReference type="GO" id="GO:0071540">
    <property type="term" value="C:eukaryotic translation initiation factor 3 complex, eIF3e"/>
    <property type="evidence" value="ECO:0007669"/>
    <property type="project" value="EnsemblFungi"/>
</dbReference>
<dbReference type="GO" id="GO:0071541">
    <property type="term" value="C:eukaryotic translation initiation factor 3 complex, eIF3m"/>
    <property type="evidence" value="ECO:0000318"/>
    <property type="project" value="GO_Central"/>
</dbReference>
<dbReference type="GO" id="GO:0034399">
    <property type="term" value="C:nuclear periphery"/>
    <property type="evidence" value="ECO:0007669"/>
    <property type="project" value="EnsemblFungi"/>
</dbReference>
<dbReference type="GO" id="GO:0003723">
    <property type="term" value="F:RNA binding"/>
    <property type="evidence" value="ECO:0000318"/>
    <property type="project" value="GO_Central"/>
</dbReference>
<dbReference type="GO" id="GO:0003743">
    <property type="term" value="F:translation initiation factor activity"/>
    <property type="evidence" value="ECO:0000318"/>
    <property type="project" value="GO_Central"/>
</dbReference>
<dbReference type="GO" id="GO:0002183">
    <property type="term" value="P:cytoplasmic translational initiation"/>
    <property type="evidence" value="ECO:0000318"/>
    <property type="project" value="GO_Central"/>
</dbReference>
<dbReference type="GO" id="GO:0001732">
    <property type="term" value="P:formation of cytoplasmic translation initiation complex"/>
    <property type="evidence" value="ECO:0007669"/>
    <property type="project" value="UniProtKB-UniRule"/>
</dbReference>
<dbReference type="FunFam" id="2.130.10.10:FF:000127">
    <property type="entry name" value="Eukaryotic translation initiation factor 3 subunit I"/>
    <property type="match status" value="1"/>
</dbReference>
<dbReference type="Gene3D" id="2.130.10.10">
    <property type="entry name" value="YVTN repeat-like/Quinoprotein amine dehydrogenase"/>
    <property type="match status" value="1"/>
</dbReference>
<dbReference type="HAMAP" id="MF_03008">
    <property type="entry name" value="eIF3i"/>
    <property type="match status" value="1"/>
</dbReference>
<dbReference type="InterPro" id="IPR027525">
    <property type="entry name" value="eIF3i"/>
</dbReference>
<dbReference type="InterPro" id="IPR015943">
    <property type="entry name" value="WD40/YVTN_repeat-like_dom_sf"/>
</dbReference>
<dbReference type="InterPro" id="IPR019775">
    <property type="entry name" value="WD40_repeat_CS"/>
</dbReference>
<dbReference type="InterPro" id="IPR036322">
    <property type="entry name" value="WD40_repeat_dom_sf"/>
</dbReference>
<dbReference type="InterPro" id="IPR001680">
    <property type="entry name" value="WD40_rpt"/>
</dbReference>
<dbReference type="PANTHER" id="PTHR19877">
    <property type="entry name" value="EUKARYOTIC TRANSLATION INITIATION FACTOR 3 SUBUNIT I"/>
    <property type="match status" value="1"/>
</dbReference>
<dbReference type="PANTHER" id="PTHR19877:SF1">
    <property type="entry name" value="EUKARYOTIC TRANSLATION INITIATION FACTOR 3 SUBUNIT I"/>
    <property type="match status" value="1"/>
</dbReference>
<dbReference type="Pfam" id="PF24805">
    <property type="entry name" value="EIF3I"/>
    <property type="match status" value="1"/>
</dbReference>
<dbReference type="SMART" id="SM00320">
    <property type="entry name" value="WD40"/>
    <property type="match status" value="5"/>
</dbReference>
<dbReference type="SUPFAM" id="SSF50978">
    <property type="entry name" value="WD40 repeat-like"/>
    <property type="match status" value="1"/>
</dbReference>
<dbReference type="PROSITE" id="PS00678">
    <property type="entry name" value="WD_REPEATS_1"/>
    <property type="match status" value="1"/>
</dbReference>
<dbReference type="PROSITE" id="PS50082">
    <property type="entry name" value="WD_REPEATS_2"/>
    <property type="match status" value="3"/>
</dbReference>
<dbReference type="PROSITE" id="PS50294">
    <property type="entry name" value="WD_REPEATS_REGION"/>
    <property type="match status" value="1"/>
</dbReference>
<proteinExistence type="inferred from homology"/>
<protein>
    <recommendedName>
        <fullName evidence="1">Eukaryotic translation initiation factor 3 subunit I</fullName>
        <shortName evidence="1">eIF3i</shortName>
    </recommendedName>
    <alternativeName>
        <fullName evidence="1">Eukaryotic translation initiation factor 3 39 kDa subunit homolog</fullName>
        <shortName evidence="1">eIF-3 39 kDa subunit homolog</shortName>
    </alternativeName>
</protein>
<evidence type="ECO:0000255" key="1">
    <source>
        <dbReference type="HAMAP-Rule" id="MF_03008"/>
    </source>
</evidence>
<keyword id="KW-0963">Cytoplasm</keyword>
<keyword id="KW-0396">Initiation factor</keyword>
<keyword id="KW-0648">Protein biosynthesis</keyword>
<keyword id="KW-1185">Reference proteome</keyword>
<keyword id="KW-0677">Repeat</keyword>
<keyword id="KW-0853">WD repeat</keyword>
<accession>Q7RXH4</accession>
<name>EIF3I_NEUCR</name>
<gene>
    <name type="primary">tif-34</name>
    <name type="ORF">NCU03876</name>
</gene>
<reference key="1">
    <citation type="journal article" date="2003" name="Nature">
        <title>The genome sequence of the filamentous fungus Neurospora crassa.</title>
        <authorList>
            <person name="Galagan J.E."/>
            <person name="Calvo S.E."/>
            <person name="Borkovich K.A."/>
            <person name="Selker E.U."/>
            <person name="Read N.D."/>
            <person name="Jaffe D.B."/>
            <person name="FitzHugh W."/>
            <person name="Ma L.-J."/>
            <person name="Smirnov S."/>
            <person name="Purcell S."/>
            <person name="Rehman B."/>
            <person name="Elkins T."/>
            <person name="Engels R."/>
            <person name="Wang S."/>
            <person name="Nielsen C.B."/>
            <person name="Butler J."/>
            <person name="Endrizzi M."/>
            <person name="Qui D."/>
            <person name="Ianakiev P."/>
            <person name="Bell-Pedersen D."/>
            <person name="Nelson M.A."/>
            <person name="Werner-Washburne M."/>
            <person name="Selitrennikoff C.P."/>
            <person name="Kinsey J.A."/>
            <person name="Braun E.L."/>
            <person name="Zelter A."/>
            <person name="Schulte U."/>
            <person name="Kothe G.O."/>
            <person name="Jedd G."/>
            <person name="Mewes H.-W."/>
            <person name="Staben C."/>
            <person name="Marcotte E."/>
            <person name="Greenberg D."/>
            <person name="Roy A."/>
            <person name="Foley K."/>
            <person name="Naylor J."/>
            <person name="Stange-Thomann N."/>
            <person name="Barrett R."/>
            <person name="Gnerre S."/>
            <person name="Kamal M."/>
            <person name="Kamvysselis M."/>
            <person name="Mauceli E.W."/>
            <person name="Bielke C."/>
            <person name="Rudd S."/>
            <person name="Frishman D."/>
            <person name="Krystofova S."/>
            <person name="Rasmussen C."/>
            <person name="Metzenberg R.L."/>
            <person name="Perkins D.D."/>
            <person name="Kroken S."/>
            <person name="Cogoni C."/>
            <person name="Macino G."/>
            <person name="Catcheside D.E.A."/>
            <person name="Li W."/>
            <person name="Pratt R.J."/>
            <person name="Osmani S.A."/>
            <person name="DeSouza C.P.C."/>
            <person name="Glass N.L."/>
            <person name="Orbach M.J."/>
            <person name="Berglund J.A."/>
            <person name="Voelker R."/>
            <person name="Yarden O."/>
            <person name="Plamann M."/>
            <person name="Seiler S."/>
            <person name="Dunlap J.C."/>
            <person name="Radford A."/>
            <person name="Aramayo R."/>
            <person name="Natvig D.O."/>
            <person name="Alex L.A."/>
            <person name="Mannhaupt G."/>
            <person name="Ebbole D.J."/>
            <person name="Freitag M."/>
            <person name="Paulsen I."/>
            <person name="Sachs M.S."/>
            <person name="Lander E.S."/>
            <person name="Nusbaum C."/>
            <person name="Birren B.W."/>
        </authorList>
    </citation>
    <scope>NUCLEOTIDE SEQUENCE [LARGE SCALE GENOMIC DNA]</scope>
    <source>
        <strain>ATCC 24698 / 74-OR23-1A / CBS 708.71 / DSM 1257 / FGSC 987</strain>
    </source>
</reference>